<reference key="1">
    <citation type="journal article" date="2004" name="Proc. Natl. Acad. Sci. U.S.A.">
        <title>Insights into the evolution of Yersinia pestis through whole-genome comparison with Yersinia pseudotuberculosis.</title>
        <authorList>
            <person name="Chain P.S.G."/>
            <person name="Carniel E."/>
            <person name="Larimer F.W."/>
            <person name="Lamerdin J."/>
            <person name="Stoutland P.O."/>
            <person name="Regala W.M."/>
            <person name="Georgescu A.M."/>
            <person name="Vergez L.M."/>
            <person name="Land M.L."/>
            <person name="Motin V.L."/>
            <person name="Brubaker R.R."/>
            <person name="Fowler J."/>
            <person name="Hinnebusch J."/>
            <person name="Marceau M."/>
            <person name="Medigue C."/>
            <person name="Simonet M."/>
            <person name="Chenal-Francisque V."/>
            <person name="Souza B."/>
            <person name="Dacheux D."/>
            <person name="Elliott J.M."/>
            <person name="Derbise A."/>
            <person name="Hauser L.J."/>
            <person name="Garcia E."/>
        </authorList>
    </citation>
    <scope>NUCLEOTIDE SEQUENCE [LARGE SCALE GENOMIC DNA]</scope>
    <source>
        <strain>IP32953</strain>
    </source>
</reference>
<name>DIAA_YERPS</name>
<proteinExistence type="inferred from homology"/>
<comment type="function">
    <text evidence="1">Required for the timely initiation of chromosomal replication via direct interactions with the DnaA initiator protein.</text>
</comment>
<comment type="subunit">
    <text evidence="1">Homotetramer; dimer of dimers.</text>
</comment>
<comment type="similarity">
    <text evidence="1">Belongs to the SIS family. DiaA subfamily.</text>
</comment>
<dbReference type="EMBL" id="BX936398">
    <property type="protein sequence ID" value="CAH22733.1"/>
    <property type="molecule type" value="Genomic_DNA"/>
</dbReference>
<dbReference type="RefSeq" id="WP_011193139.1">
    <property type="nucleotide sequence ID" value="NC_006155.1"/>
</dbReference>
<dbReference type="SMR" id="Q665M1"/>
<dbReference type="GeneID" id="96662986"/>
<dbReference type="KEGG" id="ypo:BZ17_3107"/>
<dbReference type="KEGG" id="yps:YPTB3495"/>
<dbReference type="PATRIC" id="fig|273123.14.peg.3255"/>
<dbReference type="Proteomes" id="UP000001011">
    <property type="component" value="Chromosome"/>
</dbReference>
<dbReference type="GO" id="GO:0097367">
    <property type="term" value="F:carbohydrate derivative binding"/>
    <property type="evidence" value="ECO:0007669"/>
    <property type="project" value="InterPro"/>
</dbReference>
<dbReference type="GO" id="GO:1901135">
    <property type="term" value="P:carbohydrate derivative metabolic process"/>
    <property type="evidence" value="ECO:0007669"/>
    <property type="project" value="InterPro"/>
</dbReference>
<dbReference type="GO" id="GO:0006260">
    <property type="term" value="P:DNA replication"/>
    <property type="evidence" value="ECO:0007669"/>
    <property type="project" value="UniProtKB-UniRule"/>
</dbReference>
<dbReference type="CDD" id="cd05006">
    <property type="entry name" value="SIS_GmhA"/>
    <property type="match status" value="1"/>
</dbReference>
<dbReference type="FunFam" id="3.40.50.10490:FF:000006">
    <property type="entry name" value="DnaA initiator-associating protein DiaA"/>
    <property type="match status" value="1"/>
</dbReference>
<dbReference type="Gene3D" id="3.40.50.10490">
    <property type="entry name" value="Glucose-6-phosphate isomerase like protein, domain 1"/>
    <property type="match status" value="1"/>
</dbReference>
<dbReference type="HAMAP" id="MF_01157">
    <property type="entry name" value="SIS_DiaA"/>
    <property type="match status" value="1"/>
</dbReference>
<dbReference type="InterPro" id="IPR023070">
    <property type="entry name" value="DiaA"/>
</dbReference>
<dbReference type="InterPro" id="IPR035461">
    <property type="entry name" value="GmhA/DiaA"/>
</dbReference>
<dbReference type="InterPro" id="IPR001347">
    <property type="entry name" value="SIS_dom"/>
</dbReference>
<dbReference type="InterPro" id="IPR046348">
    <property type="entry name" value="SIS_dom_sf"/>
</dbReference>
<dbReference type="InterPro" id="IPR050099">
    <property type="entry name" value="SIS_GmhA/DiaA_subfam"/>
</dbReference>
<dbReference type="NCBIfam" id="NF008138">
    <property type="entry name" value="PRK10886.1"/>
    <property type="match status" value="1"/>
</dbReference>
<dbReference type="PANTHER" id="PTHR30390:SF6">
    <property type="entry name" value="DNAA INITIATOR-ASSOCIATING PROTEIN DIAA"/>
    <property type="match status" value="1"/>
</dbReference>
<dbReference type="PANTHER" id="PTHR30390">
    <property type="entry name" value="SEDOHEPTULOSE 7-PHOSPHATE ISOMERASE / DNAA INITIATOR-ASSOCIATING FACTOR FOR REPLICATION INITIATION"/>
    <property type="match status" value="1"/>
</dbReference>
<dbReference type="Pfam" id="PF13580">
    <property type="entry name" value="SIS_2"/>
    <property type="match status" value="1"/>
</dbReference>
<dbReference type="SUPFAM" id="SSF53697">
    <property type="entry name" value="SIS domain"/>
    <property type="match status" value="1"/>
</dbReference>
<dbReference type="PROSITE" id="PS51464">
    <property type="entry name" value="SIS"/>
    <property type="match status" value="1"/>
</dbReference>
<accession>Q665M1</accession>
<feature type="chain" id="PRO_0000136564" description="DnaA initiator-associating protein DiaA">
    <location>
        <begin position="1"/>
        <end position="196"/>
    </location>
</feature>
<feature type="domain" description="SIS" evidence="1">
    <location>
        <begin position="34"/>
        <end position="196"/>
    </location>
</feature>
<sequence length="196" mass="20939">MLERIKGCFTESIQTQIAAAEALPDAISCAAMALVQSLLNGNKILCCGNGTSAANAQHFAASMINRFETERPSLPAIALNADNVVLTAITNDRLHDEVYAKQVRALGQAGDVLLAISTRGNSRDIVKAVEAAVTRDMTIVALTGYDGGELAGLLGQLDVEIRIPSHRGARVQELHMLTVNCLCDLIDNTLFPHQDD</sequence>
<gene>
    <name evidence="1" type="primary">diaA</name>
    <name type="ordered locus">YPTB3495</name>
</gene>
<evidence type="ECO:0000255" key="1">
    <source>
        <dbReference type="HAMAP-Rule" id="MF_01157"/>
    </source>
</evidence>
<organism>
    <name type="scientific">Yersinia pseudotuberculosis serotype I (strain IP32953)</name>
    <dbReference type="NCBI Taxonomy" id="273123"/>
    <lineage>
        <taxon>Bacteria</taxon>
        <taxon>Pseudomonadati</taxon>
        <taxon>Pseudomonadota</taxon>
        <taxon>Gammaproteobacteria</taxon>
        <taxon>Enterobacterales</taxon>
        <taxon>Yersiniaceae</taxon>
        <taxon>Yersinia</taxon>
    </lineage>
</organism>
<keyword id="KW-0235">DNA replication</keyword>
<protein>
    <recommendedName>
        <fullName evidence="1">DnaA initiator-associating protein DiaA</fullName>
    </recommendedName>
</protein>